<sequence length="375" mass="41993">MTPILFVDRDGTLITEPADYQIDAYEKLRFVDHVIPAMLKLRDAGYQFVIVSNQDGLGSESYPRASFEGPNNLMLQIFASQGIEFRDVLIDCSWPADNAPTRKPGIGLMVPYLQDRSIDWARSAMVGDRITDIQFAHNLNIRGFQLRTDEFGGEWDWPGIAHELADAPRRAVVQRNTKETRIRVELDLDRVAEPKTATGLPFFDHMLEQIGKHGGFALEIRAEGDLHIDEHHTIEDTGLALGQALREALGNKRGIGRYGFDPESSPWRVAGDKAQHGFTLPMDETIASAALDFSGRPYFVFDGEFKRERVGDMPTELVPHFFRSICDASGLNLHLTVRGENDHHKVEACFKALARALRQAIRREGTALPTTKGAL</sequence>
<name>HIS7_XANE5</name>
<organism>
    <name type="scientific">Xanthomonas euvesicatoria pv. vesicatoria (strain 85-10)</name>
    <name type="common">Xanthomonas campestris pv. vesicatoria</name>
    <dbReference type="NCBI Taxonomy" id="316273"/>
    <lineage>
        <taxon>Bacteria</taxon>
        <taxon>Pseudomonadati</taxon>
        <taxon>Pseudomonadota</taxon>
        <taxon>Gammaproteobacteria</taxon>
        <taxon>Lysobacterales</taxon>
        <taxon>Lysobacteraceae</taxon>
        <taxon>Xanthomonas</taxon>
    </lineage>
</organism>
<reference key="1">
    <citation type="journal article" date="2005" name="J. Bacteriol.">
        <title>Insights into genome plasticity and pathogenicity of the plant pathogenic Bacterium Xanthomonas campestris pv. vesicatoria revealed by the complete genome sequence.</title>
        <authorList>
            <person name="Thieme F."/>
            <person name="Koebnik R."/>
            <person name="Bekel T."/>
            <person name="Berger C."/>
            <person name="Boch J."/>
            <person name="Buettner D."/>
            <person name="Caldana C."/>
            <person name="Gaigalat L."/>
            <person name="Goesmann A."/>
            <person name="Kay S."/>
            <person name="Kirchner O."/>
            <person name="Lanz C."/>
            <person name="Linke B."/>
            <person name="McHardy A.C."/>
            <person name="Meyer F."/>
            <person name="Mittenhuber G."/>
            <person name="Nies D.H."/>
            <person name="Niesbach-Kloesgen U."/>
            <person name="Patschkowski T."/>
            <person name="Rueckert C."/>
            <person name="Rupp O."/>
            <person name="Schneiker S."/>
            <person name="Schuster S.C."/>
            <person name="Vorhoelter F.J."/>
            <person name="Weber E."/>
            <person name="Puehler A."/>
            <person name="Bonas U."/>
            <person name="Bartels D."/>
            <person name="Kaiser O."/>
        </authorList>
    </citation>
    <scope>NUCLEOTIDE SEQUENCE [LARGE SCALE GENOMIC DNA]</scope>
    <source>
        <strain>85-10</strain>
    </source>
</reference>
<evidence type="ECO:0000255" key="1">
    <source>
        <dbReference type="HAMAP-Rule" id="MF_01022"/>
    </source>
</evidence>
<comment type="catalytic activity">
    <reaction evidence="1">
        <text>D-erythro-1-(imidazol-4-yl)glycerol 3-phosphate = 3-(imidazol-4-yl)-2-oxopropyl phosphate + H2O</text>
        <dbReference type="Rhea" id="RHEA:11040"/>
        <dbReference type="ChEBI" id="CHEBI:15377"/>
        <dbReference type="ChEBI" id="CHEBI:57766"/>
        <dbReference type="ChEBI" id="CHEBI:58278"/>
        <dbReference type="EC" id="4.2.1.19"/>
    </reaction>
</comment>
<comment type="catalytic activity">
    <reaction evidence="1">
        <text>L-histidinol phosphate + H2O = L-histidinol + phosphate</text>
        <dbReference type="Rhea" id="RHEA:14465"/>
        <dbReference type="ChEBI" id="CHEBI:15377"/>
        <dbReference type="ChEBI" id="CHEBI:43474"/>
        <dbReference type="ChEBI" id="CHEBI:57699"/>
        <dbReference type="ChEBI" id="CHEBI:57980"/>
        <dbReference type="EC" id="3.1.3.15"/>
    </reaction>
</comment>
<comment type="cofactor">
    <cofactor evidence="1">
        <name>Mg(2+)</name>
        <dbReference type="ChEBI" id="CHEBI:18420"/>
    </cofactor>
</comment>
<comment type="pathway">
    <text evidence="1">Amino-acid biosynthesis; L-histidine biosynthesis; L-histidine from 5-phospho-alpha-D-ribose 1-diphosphate: step 6/9.</text>
</comment>
<comment type="pathway">
    <text evidence="1">Amino-acid biosynthesis; L-histidine biosynthesis; L-histidine from 5-phospho-alpha-D-ribose 1-diphosphate: step 8/9.</text>
</comment>
<comment type="subcellular location">
    <subcellularLocation>
        <location evidence="1">Cytoplasm</location>
    </subcellularLocation>
</comment>
<comment type="similarity">
    <text evidence="1">In the N-terminal section; belongs to the histidinol-phosphatase family.</text>
</comment>
<comment type="similarity">
    <text evidence="1">In the C-terminal section; belongs to the imidazoleglycerol-phosphate dehydratase family.</text>
</comment>
<gene>
    <name evidence="1" type="primary">hisB</name>
    <name type="ordered locus">XCV1877</name>
</gene>
<accession>Q3BUF5</accession>
<dbReference type="EC" id="3.1.3.15" evidence="1"/>
<dbReference type="EC" id="4.2.1.19" evidence="1"/>
<dbReference type="EMBL" id="AM039952">
    <property type="protein sequence ID" value="CAJ23554.1"/>
    <property type="molecule type" value="Genomic_DNA"/>
</dbReference>
<dbReference type="RefSeq" id="WP_011347187.1">
    <property type="nucleotide sequence ID" value="NZ_CP017190.1"/>
</dbReference>
<dbReference type="SMR" id="Q3BUF5"/>
<dbReference type="STRING" id="456327.BJD11_13040"/>
<dbReference type="KEGG" id="xcv:XCV1877"/>
<dbReference type="eggNOG" id="COG0131">
    <property type="taxonomic scope" value="Bacteria"/>
</dbReference>
<dbReference type="eggNOG" id="COG0241">
    <property type="taxonomic scope" value="Bacteria"/>
</dbReference>
<dbReference type="HOGENOM" id="CLU_044308_0_0_6"/>
<dbReference type="UniPathway" id="UPA00031">
    <property type="reaction ID" value="UER00011"/>
</dbReference>
<dbReference type="UniPathway" id="UPA00031">
    <property type="reaction ID" value="UER00013"/>
</dbReference>
<dbReference type="Proteomes" id="UP000007069">
    <property type="component" value="Chromosome"/>
</dbReference>
<dbReference type="GO" id="GO:0005737">
    <property type="term" value="C:cytoplasm"/>
    <property type="evidence" value="ECO:0007669"/>
    <property type="project" value="UniProtKB-SubCell"/>
</dbReference>
<dbReference type="GO" id="GO:0004401">
    <property type="term" value="F:histidinol-phosphatase activity"/>
    <property type="evidence" value="ECO:0007669"/>
    <property type="project" value="UniProtKB-UniRule"/>
</dbReference>
<dbReference type="GO" id="GO:0004424">
    <property type="term" value="F:imidazoleglycerol-phosphate dehydratase activity"/>
    <property type="evidence" value="ECO:0007669"/>
    <property type="project" value="UniProtKB-UniRule"/>
</dbReference>
<dbReference type="GO" id="GO:0046872">
    <property type="term" value="F:metal ion binding"/>
    <property type="evidence" value="ECO:0007669"/>
    <property type="project" value="UniProtKB-KW"/>
</dbReference>
<dbReference type="GO" id="GO:0000105">
    <property type="term" value="P:L-histidine biosynthetic process"/>
    <property type="evidence" value="ECO:0007669"/>
    <property type="project" value="UniProtKB-UniRule"/>
</dbReference>
<dbReference type="CDD" id="cd07914">
    <property type="entry name" value="IGPD"/>
    <property type="match status" value="1"/>
</dbReference>
<dbReference type="FunFam" id="3.30.230.40:FF:000001">
    <property type="entry name" value="Imidazoleglycerol-phosphate dehydratase HisB"/>
    <property type="match status" value="1"/>
</dbReference>
<dbReference type="FunFam" id="3.30.230.40:FF:000003">
    <property type="entry name" value="Imidazoleglycerol-phosphate dehydratase HisB"/>
    <property type="match status" value="1"/>
</dbReference>
<dbReference type="Gene3D" id="3.40.50.1000">
    <property type="entry name" value="HAD superfamily/HAD-like"/>
    <property type="match status" value="1"/>
</dbReference>
<dbReference type="Gene3D" id="3.30.230.40">
    <property type="entry name" value="Imidazole glycerol phosphate dehydratase, domain 1"/>
    <property type="match status" value="2"/>
</dbReference>
<dbReference type="HAMAP" id="MF_01022">
    <property type="entry name" value="Bifunc_HisB"/>
    <property type="match status" value="1"/>
</dbReference>
<dbReference type="HAMAP" id="MF_00076">
    <property type="entry name" value="HisB"/>
    <property type="match status" value="1"/>
</dbReference>
<dbReference type="InterPro" id="IPR036412">
    <property type="entry name" value="HAD-like_sf"/>
</dbReference>
<dbReference type="InterPro" id="IPR006549">
    <property type="entry name" value="HAD-SF_hydro_IIIA"/>
</dbReference>
<dbReference type="InterPro" id="IPR023214">
    <property type="entry name" value="HAD_sf"/>
</dbReference>
<dbReference type="InterPro" id="IPR020566">
    <property type="entry name" value="His_synth_bifunc_HisB"/>
</dbReference>
<dbReference type="InterPro" id="IPR005954">
    <property type="entry name" value="HisB_N"/>
</dbReference>
<dbReference type="InterPro" id="IPR006543">
    <property type="entry name" value="Histidinol-phos"/>
</dbReference>
<dbReference type="InterPro" id="IPR038494">
    <property type="entry name" value="IGPD_sf"/>
</dbReference>
<dbReference type="InterPro" id="IPR000807">
    <property type="entry name" value="ImidazoleglycerolP_deHydtase"/>
</dbReference>
<dbReference type="InterPro" id="IPR020565">
    <property type="entry name" value="ImidazoleglycerP_deHydtase_CS"/>
</dbReference>
<dbReference type="InterPro" id="IPR020568">
    <property type="entry name" value="Ribosomal_Su5_D2-typ_SF"/>
</dbReference>
<dbReference type="NCBIfam" id="TIGR01662">
    <property type="entry name" value="HAD-SF-IIIA"/>
    <property type="match status" value="1"/>
</dbReference>
<dbReference type="NCBIfam" id="TIGR01261">
    <property type="entry name" value="hisB_Nterm"/>
    <property type="match status" value="1"/>
</dbReference>
<dbReference type="NCBIfam" id="TIGR01656">
    <property type="entry name" value="Histidinol-ppas"/>
    <property type="match status" value="1"/>
</dbReference>
<dbReference type="NCBIfam" id="NF003937">
    <property type="entry name" value="PRK05446.1"/>
    <property type="match status" value="1"/>
</dbReference>
<dbReference type="PANTHER" id="PTHR23133:SF2">
    <property type="entry name" value="IMIDAZOLEGLYCEROL-PHOSPHATE DEHYDRATASE"/>
    <property type="match status" value="1"/>
</dbReference>
<dbReference type="PANTHER" id="PTHR23133">
    <property type="entry name" value="IMIDAZOLEGLYCEROL-PHOSPHATE DEHYDRATASE HIS7"/>
    <property type="match status" value="1"/>
</dbReference>
<dbReference type="Pfam" id="PF13242">
    <property type="entry name" value="Hydrolase_like"/>
    <property type="match status" value="1"/>
</dbReference>
<dbReference type="Pfam" id="PF00475">
    <property type="entry name" value="IGPD"/>
    <property type="match status" value="1"/>
</dbReference>
<dbReference type="SUPFAM" id="SSF56784">
    <property type="entry name" value="HAD-like"/>
    <property type="match status" value="1"/>
</dbReference>
<dbReference type="SUPFAM" id="SSF54211">
    <property type="entry name" value="Ribosomal protein S5 domain 2-like"/>
    <property type="match status" value="2"/>
</dbReference>
<dbReference type="PROSITE" id="PS00954">
    <property type="entry name" value="IGP_DEHYDRATASE_1"/>
    <property type="match status" value="1"/>
</dbReference>
<dbReference type="PROSITE" id="PS00955">
    <property type="entry name" value="IGP_DEHYDRATASE_2"/>
    <property type="match status" value="1"/>
</dbReference>
<keyword id="KW-0028">Amino-acid biosynthesis</keyword>
<keyword id="KW-0963">Cytoplasm</keyword>
<keyword id="KW-0368">Histidine biosynthesis</keyword>
<keyword id="KW-0378">Hydrolase</keyword>
<keyword id="KW-0456">Lyase</keyword>
<keyword id="KW-0460">Magnesium</keyword>
<keyword id="KW-0479">Metal-binding</keyword>
<keyword id="KW-0511">Multifunctional enzyme</keyword>
<feature type="chain" id="PRO_1000063450" description="Histidine biosynthesis bifunctional protein HisB">
    <location>
        <begin position="1"/>
        <end position="375"/>
    </location>
</feature>
<feature type="region of interest" description="Histidinol-phosphatase" evidence="1">
    <location>
        <begin position="1"/>
        <end position="168"/>
    </location>
</feature>
<feature type="region of interest" description="Imidazoleglycerol-phosphate dehydratase" evidence="1">
    <location>
        <begin position="169"/>
        <end position="375"/>
    </location>
</feature>
<feature type="active site" description="Nucleophile" evidence="1">
    <location>
        <position position="8"/>
    </location>
</feature>
<feature type="active site" description="Proton donor" evidence="1">
    <location>
        <position position="10"/>
    </location>
</feature>
<feature type="binding site" evidence="1">
    <location>
        <position position="8"/>
    </location>
    <ligand>
        <name>Mg(2+)</name>
        <dbReference type="ChEBI" id="CHEBI:18420"/>
    </ligand>
</feature>
<feature type="binding site" evidence="1">
    <location>
        <position position="10"/>
    </location>
    <ligand>
        <name>Mg(2+)</name>
        <dbReference type="ChEBI" id="CHEBI:18420"/>
    </ligand>
</feature>
<feature type="binding site" evidence="1">
    <location>
        <position position="128"/>
    </location>
    <ligand>
        <name>Mg(2+)</name>
        <dbReference type="ChEBI" id="CHEBI:18420"/>
    </ligand>
</feature>
<proteinExistence type="inferred from homology"/>
<protein>
    <recommendedName>
        <fullName evidence="1">Histidine biosynthesis bifunctional protein HisB</fullName>
    </recommendedName>
    <domain>
        <recommendedName>
            <fullName evidence="1">Histidinol-phosphatase</fullName>
            <ecNumber evidence="1">3.1.3.15</ecNumber>
        </recommendedName>
    </domain>
    <domain>
        <recommendedName>
            <fullName evidence="1">Imidazoleglycerol-phosphate dehydratase</fullName>
            <shortName evidence="1">IGPD</shortName>
            <ecNumber evidence="1">4.2.1.19</ecNumber>
        </recommendedName>
    </domain>
</protein>